<organism>
    <name type="scientific">Brachyspira hyodysenteriae</name>
    <name type="common">Treponema hyodysenteriae</name>
    <dbReference type="NCBI Taxonomy" id="159"/>
    <lineage>
        <taxon>Bacteria</taxon>
        <taxon>Pseudomonadati</taxon>
        <taxon>Spirochaetota</taxon>
        <taxon>Spirochaetia</taxon>
        <taxon>Brachyspirales</taxon>
        <taxon>Brachyspiraceae</taxon>
        <taxon>Brachyspira</taxon>
    </lineage>
</organism>
<dbReference type="EMBL" id="U51635">
    <property type="protein sequence ID" value="AAA96521.1"/>
    <property type="molecule type" value="Genomic_DNA"/>
</dbReference>
<dbReference type="RefSeq" id="WP_008723370.1">
    <property type="nucleotide sequence ID" value="NZ_MKXF01000009.1"/>
</dbReference>
<dbReference type="SMR" id="P52857"/>
<dbReference type="GeneID" id="66487630"/>
<dbReference type="PATRIC" id="fig|159.53.peg.1975"/>
<dbReference type="OMA" id="VDIEIKM"/>
<dbReference type="GO" id="GO:1990904">
    <property type="term" value="C:ribonucleoprotein complex"/>
    <property type="evidence" value="ECO:0007669"/>
    <property type="project" value="UniProtKB-KW"/>
</dbReference>
<dbReference type="GO" id="GO:0005840">
    <property type="term" value="C:ribosome"/>
    <property type="evidence" value="ECO:0007669"/>
    <property type="project" value="UniProtKB-KW"/>
</dbReference>
<dbReference type="GO" id="GO:0003735">
    <property type="term" value="F:structural constituent of ribosome"/>
    <property type="evidence" value="ECO:0007669"/>
    <property type="project" value="InterPro"/>
</dbReference>
<dbReference type="GO" id="GO:0000049">
    <property type="term" value="F:tRNA binding"/>
    <property type="evidence" value="ECO:0007669"/>
    <property type="project" value="UniProtKB-UniRule"/>
</dbReference>
<dbReference type="GO" id="GO:0006412">
    <property type="term" value="P:translation"/>
    <property type="evidence" value="ECO:0007669"/>
    <property type="project" value="UniProtKB-UniRule"/>
</dbReference>
<dbReference type="FunFam" id="3.30.70.600:FF:000003">
    <property type="entry name" value="30S ribosomal protein S10"/>
    <property type="match status" value="1"/>
</dbReference>
<dbReference type="Gene3D" id="3.30.70.600">
    <property type="entry name" value="Ribosomal protein S10 domain"/>
    <property type="match status" value="1"/>
</dbReference>
<dbReference type="HAMAP" id="MF_00508">
    <property type="entry name" value="Ribosomal_uS10"/>
    <property type="match status" value="1"/>
</dbReference>
<dbReference type="InterPro" id="IPR001848">
    <property type="entry name" value="Ribosomal_uS10"/>
</dbReference>
<dbReference type="InterPro" id="IPR018268">
    <property type="entry name" value="Ribosomal_uS10_CS"/>
</dbReference>
<dbReference type="InterPro" id="IPR027486">
    <property type="entry name" value="Ribosomal_uS10_dom"/>
</dbReference>
<dbReference type="InterPro" id="IPR036838">
    <property type="entry name" value="Ribosomal_uS10_dom_sf"/>
</dbReference>
<dbReference type="NCBIfam" id="NF001861">
    <property type="entry name" value="PRK00596.1"/>
    <property type="match status" value="1"/>
</dbReference>
<dbReference type="NCBIfam" id="TIGR01049">
    <property type="entry name" value="rpsJ_bact"/>
    <property type="match status" value="1"/>
</dbReference>
<dbReference type="PANTHER" id="PTHR11700">
    <property type="entry name" value="30S RIBOSOMAL PROTEIN S10 FAMILY MEMBER"/>
    <property type="match status" value="1"/>
</dbReference>
<dbReference type="Pfam" id="PF00338">
    <property type="entry name" value="Ribosomal_S10"/>
    <property type="match status" value="1"/>
</dbReference>
<dbReference type="PRINTS" id="PR00971">
    <property type="entry name" value="RIBOSOMALS10"/>
</dbReference>
<dbReference type="SMART" id="SM01403">
    <property type="entry name" value="Ribosomal_S10"/>
    <property type="match status" value="1"/>
</dbReference>
<dbReference type="SUPFAM" id="SSF54999">
    <property type="entry name" value="Ribosomal protein S10"/>
    <property type="match status" value="1"/>
</dbReference>
<dbReference type="PROSITE" id="PS00361">
    <property type="entry name" value="RIBOSOMAL_S10"/>
    <property type="match status" value="1"/>
</dbReference>
<reference key="1">
    <citation type="submission" date="1996-03" db="EMBL/GenBank/DDBJ databases">
        <authorList>
            <person name="Elder R.O."/>
            <person name="Duhamel G.E."/>
            <person name="Joens J."/>
        </authorList>
    </citation>
    <scope>NUCLEOTIDE SEQUENCE [GENOMIC DNA]</scope>
    <source>
        <strain>B204</strain>
    </source>
</reference>
<comment type="function">
    <text evidence="1">Involved in the binding of tRNA to the ribosomes.</text>
</comment>
<comment type="subunit">
    <text evidence="1">Part of the 30S ribosomal subunit.</text>
</comment>
<comment type="similarity">
    <text evidence="1">Belongs to the universal ribosomal protein uS10 family.</text>
</comment>
<gene>
    <name evidence="1" type="primary">rpsJ</name>
</gene>
<keyword id="KW-0687">Ribonucleoprotein</keyword>
<keyword id="KW-0689">Ribosomal protein</keyword>
<evidence type="ECO:0000255" key="1">
    <source>
        <dbReference type="HAMAP-Rule" id="MF_00508"/>
    </source>
</evidence>
<evidence type="ECO:0000305" key="2"/>
<feature type="chain" id="PRO_0000146624" description="Small ribosomal subunit protein uS10">
    <location>
        <begin position="1"/>
        <end position="101"/>
    </location>
</feature>
<accession>P52857</accession>
<proteinExistence type="inferred from homology"/>
<sequence>MKEQKIRVKLKAFDIELIDQSAQSIVASVKKTGARVSGPIPLPTSIRKVTVIRSPHVNIKSREQFEMRIYKRLIDIFDVTPQTTESLKKLALPAGVDVQLK</sequence>
<protein>
    <recommendedName>
        <fullName evidence="1">Small ribosomal subunit protein uS10</fullName>
    </recommendedName>
    <alternativeName>
        <fullName evidence="2">30S ribosomal protein S10</fullName>
    </alternativeName>
</protein>
<name>RS10_BRAHO</name>